<proteinExistence type="predicted"/>
<keyword id="KW-1185">Reference proteome</keyword>
<gene>
    <name type="ordered locus">BQ2027_MB0988C</name>
</gene>
<feature type="chain" id="PRO_0000103760" description="Uncharacterized protein Mb0988c">
    <location>
        <begin position="1"/>
        <end position="266"/>
    </location>
</feature>
<organism>
    <name type="scientific">Mycobacterium bovis (strain ATCC BAA-935 / AF2122/97)</name>
    <dbReference type="NCBI Taxonomy" id="233413"/>
    <lineage>
        <taxon>Bacteria</taxon>
        <taxon>Bacillati</taxon>
        <taxon>Actinomycetota</taxon>
        <taxon>Actinomycetes</taxon>
        <taxon>Mycobacteriales</taxon>
        <taxon>Mycobacteriaceae</taxon>
        <taxon>Mycobacterium</taxon>
        <taxon>Mycobacterium tuberculosis complex</taxon>
    </lineage>
</organism>
<reference key="1">
    <citation type="journal article" date="2003" name="Proc. Natl. Acad. Sci. U.S.A.">
        <title>The complete genome sequence of Mycobacterium bovis.</title>
        <authorList>
            <person name="Garnier T."/>
            <person name="Eiglmeier K."/>
            <person name="Camus J.-C."/>
            <person name="Medina N."/>
            <person name="Mansoor H."/>
            <person name="Pryor M."/>
            <person name="Duthoy S."/>
            <person name="Grondin S."/>
            <person name="Lacroix C."/>
            <person name="Monsempe C."/>
            <person name="Simon S."/>
            <person name="Harris B."/>
            <person name="Atkin R."/>
            <person name="Doggett J."/>
            <person name="Mayes R."/>
            <person name="Keating L."/>
            <person name="Wheeler P.R."/>
            <person name="Parkhill J."/>
            <person name="Barrell B.G."/>
            <person name="Cole S.T."/>
            <person name="Gordon S.V."/>
            <person name="Hewinson R.G."/>
        </authorList>
    </citation>
    <scope>NUCLEOTIDE SEQUENCE [LARGE SCALE GENOMIC DNA]</scope>
    <source>
        <strain>ATCC BAA-935 / AF2122/97</strain>
    </source>
</reference>
<reference key="2">
    <citation type="journal article" date="2017" name="Genome Announc.">
        <title>Updated reference genome sequence and annotation of Mycobacterium bovis AF2122/97.</title>
        <authorList>
            <person name="Malone K.M."/>
            <person name="Farrell D."/>
            <person name="Stuber T.P."/>
            <person name="Schubert O.T."/>
            <person name="Aebersold R."/>
            <person name="Robbe-Austerman S."/>
            <person name="Gordon S.V."/>
        </authorList>
    </citation>
    <scope>NUCLEOTIDE SEQUENCE [LARGE SCALE GENOMIC DNA]</scope>
    <scope>GENOME REANNOTATION</scope>
    <source>
        <strain>ATCC BAA-935 / AF2122/97</strain>
    </source>
</reference>
<sequence length="266" mass="28069">MLQRELTRLQNGWLSRDGVWHTDTDKLADLRALRDTLAAHPGTSLILLDTASDPRKVLAAVGVGDVDNAERVGVTMGGLNTRVSSSVGDMVKEAGIQRAKAAELRERAGWPNYDAVASIAWLGYDAPDGLKDVMHDWSARDAAGPLNRFDKGLAATTNVSDQHITAFGHSYGSLVTSLALQQGAPVSDVVLYGSPGTELTHASQLGVEPGHAFYMIGVNDHVANTIPEFGAFGSAPQDVPGMTQLSVNTGLAPGPLLGDGQLHERA</sequence>
<name>Y988_MYCBO</name>
<accession>P64778</accession>
<accession>A0A1R3XWY8</accession>
<accession>P71547</accession>
<accession>X2BGL0</accession>
<protein>
    <recommendedName>
        <fullName>Uncharacterized protein Mb0988c</fullName>
    </recommendedName>
</protein>
<dbReference type="EMBL" id="LT708304">
    <property type="protein sequence ID" value="SIT99587.1"/>
    <property type="molecule type" value="Genomic_DNA"/>
</dbReference>
<dbReference type="RefSeq" id="NP_854645.1">
    <property type="nucleotide sequence ID" value="NC_002945.3"/>
</dbReference>
<dbReference type="ESTHER" id="myctu-y963">
    <property type="family name" value="Duf_1023"/>
</dbReference>
<dbReference type="KEGG" id="mbo:BQ2027_MB0988C"/>
<dbReference type="PATRIC" id="fig|233413.5.peg.1077"/>
<dbReference type="Proteomes" id="UP000001419">
    <property type="component" value="Chromosome"/>
</dbReference>
<dbReference type="InterPro" id="IPR029058">
    <property type="entry name" value="AB_hydrolase_fold"/>
</dbReference>
<dbReference type="InterPro" id="IPR010427">
    <property type="entry name" value="DUF1023"/>
</dbReference>
<dbReference type="Pfam" id="PF06259">
    <property type="entry name" value="Abhydrolase_8"/>
    <property type="match status" value="1"/>
</dbReference>
<dbReference type="SUPFAM" id="SSF53474">
    <property type="entry name" value="alpha/beta-Hydrolases"/>
    <property type="match status" value="1"/>
</dbReference>